<keyword id="KW-0004">4Fe-4S</keyword>
<keyword id="KW-0067">ATP-binding</keyword>
<keyword id="KW-0408">Iron</keyword>
<keyword id="KW-0411">Iron-sulfur</keyword>
<keyword id="KW-0479">Metal-binding</keyword>
<keyword id="KW-0547">Nucleotide-binding</keyword>
<keyword id="KW-1185">Reference proteome</keyword>
<keyword id="KW-0677">Repeat</keyword>
<evidence type="ECO:0000250" key="1"/>
<evidence type="ECO:0000255" key="2"/>
<evidence type="ECO:0000255" key="3">
    <source>
        <dbReference type="PROSITE-ProRule" id="PRU00711"/>
    </source>
</evidence>
<sequence>MDYLGIIMKIAIISGKGGVGKSSISTSLAKLFSKEFNIVALDCDVDAPNFNLMFDVKDKKLLEVIYREIYEINDDCIRCGKCLDVCQFDAIGDFKINPILCEGCGACELICEFDAIEPIKRESGYIYEGFVGFPLIWGELEVGESGSGKIIEHIKNHAKKYKAELGIIDGPPGVGCPLISTVKDVDLALCIVEPTKSSVNDCLRLIETLNFFNVEYLIVENKKGMNNINYPFKIFHSIPFDFDVPKLIANKILLCDSNSKVSESIKELYEKLKEFI</sequence>
<reference key="1">
    <citation type="journal article" date="1996" name="Science">
        <title>Complete genome sequence of the methanogenic archaeon, Methanococcus jannaschii.</title>
        <authorList>
            <person name="Bult C.J."/>
            <person name="White O."/>
            <person name="Olsen G.J."/>
            <person name="Zhou L."/>
            <person name="Fleischmann R.D."/>
            <person name="Sutton G.G."/>
            <person name="Blake J.A."/>
            <person name="FitzGerald L.M."/>
            <person name="Clayton R.A."/>
            <person name="Gocayne J.D."/>
            <person name="Kerlavage A.R."/>
            <person name="Dougherty B.A."/>
            <person name="Tomb J.-F."/>
            <person name="Adams M.D."/>
            <person name="Reich C.I."/>
            <person name="Overbeek R."/>
            <person name="Kirkness E.F."/>
            <person name="Weinstock K.G."/>
            <person name="Merrick J.M."/>
            <person name="Glodek A."/>
            <person name="Scott J.L."/>
            <person name="Geoghagen N.S.M."/>
            <person name="Weidman J.F."/>
            <person name="Fuhrmann J.L."/>
            <person name="Nguyen D."/>
            <person name="Utterback T.R."/>
            <person name="Kelley J.M."/>
            <person name="Peterson J.D."/>
            <person name="Sadow P.W."/>
            <person name="Hanna M.C."/>
            <person name="Cotton M.D."/>
            <person name="Roberts K.M."/>
            <person name="Hurst M.A."/>
            <person name="Kaine B.P."/>
            <person name="Borodovsky M."/>
            <person name="Klenk H.-P."/>
            <person name="Fraser C.M."/>
            <person name="Smith H.O."/>
            <person name="Woese C.R."/>
            <person name="Venter J.C."/>
        </authorList>
    </citation>
    <scope>NUCLEOTIDE SEQUENCE [LARGE SCALE GENOMIC DNA]</scope>
    <source>
        <strain>ATCC 43067 / DSM 2661 / JAL-1 / JCM 10045 / NBRC 100440</strain>
    </source>
</reference>
<protein>
    <recommendedName>
        <fullName>Uncharacterized protein MJ0578</fullName>
    </recommendedName>
</protein>
<gene>
    <name type="ordered locus">MJ0578</name>
</gene>
<feature type="chain" id="PRO_0000159310" description="Uncharacterized protein MJ0578">
    <location>
        <begin position="1"/>
        <end position="276"/>
    </location>
</feature>
<feature type="domain" description="4Fe-4S ferredoxin-type 1" evidence="3">
    <location>
        <begin position="68"/>
        <end position="96"/>
    </location>
</feature>
<feature type="domain" description="4Fe-4S ferredoxin-type 2" evidence="3">
    <location>
        <begin position="92"/>
        <end position="121"/>
    </location>
</feature>
<feature type="binding site" evidence="2">
    <location>
        <begin position="15"/>
        <end position="22"/>
    </location>
    <ligand>
        <name>ATP</name>
        <dbReference type="ChEBI" id="CHEBI:30616"/>
    </ligand>
</feature>
<feature type="binding site" evidence="1">
    <location>
        <position position="76"/>
    </location>
    <ligand>
        <name>[4Fe-4S] cluster</name>
        <dbReference type="ChEBI" id="CHEBI:49883"/>
        <label>1</label>
    </ligand>
</feature>
<feature type="binding site" evidence="1">
    <location>
        <position position="79"/>
    </location>
    <ligand>
        <name>[4Fe-4S] cluster</name>
        <dbReference type="ChEBI" id="CHEBI:49883"/>
        <label>1</label>
    </ligand>
</feature>
<feature type="binding site" evidence="1">
    <location>
        <position position="82"/>
    </location>
    <ligand>
        <name>[4Fe-4S] cluster</name>
        <dbReference type="ChEBI" id="CHEBI:49883"/>
        <label>1</label>
    </ligand>
</feature>
<feature type="binding site" evidence="1">
    <location>
        <position position="86"/>
    </location>
    <ligand>
        <name>[4Fe-4S] cluster</name>
        <dbReference type="ChEBI" id="CHEBI:49883"/>
        <label>2</label>
    </ligand>
</feature>
<feature type="binding site" evidence="1">
    <location>
        <position position="101"/>
    </location>
    <ligand>
        <name>[4Fe-4S] cluster</name>
        <dbReference type="ChEBI" id="CHEBI:49883"/>
        <label>2</label>
    </ligand>
</feature>
<feature type="binding site" evidence="1">
    <location>
        <position position="104"/>
    </location>
    <ligand>
        <name>[4Fe-4S] cluster</name>
        <dbReference type="ChEBI" id="CHEBI:49883"/>
        <label>2</label>
    </ligand>
</feature>
<feature type="binding site" evidence="1">
    <location>
        <position position="107"/>
    </location>
    <ligand>
        <name>[4Fe-4S] cluster</name>
        <dbReference type="ChEBI" id="CHEBI:49883"/>
        <label>2</label>
    </ligand>
</feature>
<feature type="binding site" evidence="1">
    <location>
        <position position="111"/>
    </location>
    <ligand>
        <name>[4Fe-4S] cluster</name>
        <dbReference type="ChEBI" id="CHEBI:49883"/>
        <label>1</label>
    </ligand>
</feature>
<name>Y578_METJA</name>
<dbReference type="EMBL" id="L77117">
    <property type="protein sequence ID" value="AAB98569.1"/>
    <property type="molecule type" value="Genomic_DNA"/>
</dbReference>
<dbReference type="PIR" id="B64372">
    <property type="entry name" value="B64372"/>
</dbReference>
<dbReference type="SMR" id="Q57998"/>
<dbReference type="STRING" id="243232.MJ_0578"/>
<dbReference type="PaxDb" id="243232-MJ_0578"/>
<dbReference type="EnsemblBacteria" id="AAB98569">
    <property type="protein sequence ID" value="AAB98569"/>
    <property type="gene ID" value="MJ_0578"/>
</dbReference>
<dbReference type="KEGG" id="mja:MJ_0578"/>
<dbReference type="eggNOG" id="arCOG04073">
    <property type="taxonomic scope" value="Archaea"/>
</dbReference>
<dbReference type="HOGENOM" id="CLU_067767_0_0_2"/>
<dbReference type="InParanoid" id="Q57998"/>
<dbReference type="PhylomeDB" id="Q57998"/>
<dbReference type="Proteomes" id="UP000000805">
    <property type="component" value="Chromosome"/>
</dbReference>
<dbReference type="GO" id="GO:0051539">
    <property type="term" value="F:4 iron, 4 sulfur cluster binding"/>
    <property type="evidence" value="ECO:0007669"/>
    <property type="project" value="UniProtKB-KW"/>
</dbReference>
<dbReference type="GO" id="GO:0005524">
    <property type="term" value="F:ATP binding"/>
    <property type="evidence" value="ECO:0007669"/>
    <property type="project" value="UniProtKB-KW"/>
</dbReference>
<dbReference type="GO" id="GO:0046872">
    <property type="term" value="F:metal ion binding"/>
    <property type="evidence" value="ECO:0007669"/>
    <property type="project" value="UniProtKB-KW"/>
</dbReference>
<dbReference type="GO" id="GO:0016491">
    <property type="term" value="F:oxidoreductase activity"/>
    <property type="evidence" value="ECO:0007669"/>
    <property type="project" value="UniProtKB-ARBA"/>
</dbReference>
<dbReference type="Gene3D" id="3.30.70.20">
    <property type="match status" value="1"/>
</dbReference>
<dbReference type="Gene3D" id="3.40.50.300">
    <property type="entry name" value="P-loop containing nucleotide triphosphate hydrolases"/>
    <property type="match status" value="1"/>
</dbReference>
<dbReference type="InterPro" id="IPR017896">
    <property type="entry name" value="4Fe4S_Fe-S-bd"/>
</dbReference>
<dbReference type="InterPro" id="IPR017900">
    <property type="entry name" value="4Fe4S_Fe_S_CS"/>
</dbReference>
<dbReference type="InterPro" id="IPR002586">
    <property type="entry name" value="CobQ/CobB/MinD/ParA_Nub-bd_dom"/>
</dbReference>
<dbReference type="InterPro" id="IPR027417">
    <property type="entry name" value="P-loop_NTPase"/>
</dbReference>
<dbReference type="PANTHER" id="PTHR43534:SF1">
    <property type="entry name" value="4FE-4S CLUSTER CONTAINING PARA FAMILY ATPASE PROTEIN"/>
    <property type="match status" value="1"/>
</dbReference>
<dbReference type="PANTHER" id="PTHR43534">
    <property type="entry name" value="MIND SUPERFAMILY P-LOOP ATPASE CONTAINING AN INSERTED FERREDOXIN DOMAIN"/>
    <property type="match status" value="1"/>
</dbReference>
<dbReference type="Pfam" id="PF01656">
    <property type="entry name" value="CbiA"/>
    <property type="match status" value="1"/>
</dbReference>
<dbReference type="Pfam" id="PF00037">
    <property type="entry name" value="Fer4"/>
    <property type="match status" value="2"/>
</dbReference>
<dbReference type="SUPFAM" id="SSF54862">
    <property type="entry name" value="4Fe-4S ferredoxins"/>
    <property type="match status" value="1"/>
</dbReference>
<dbReference type="SUPFAM" id="SSF52540">
    <property type="entry name" value="P-loop containing nucleoside triphosphate hydrolases"/>
    <property type="match status" value="1"/>
</dbReference>
<dbReference type="PROSITE" id="PS00198">
    <property type="entry name" value="4FE4S_FER_1"/>
    <property type="match status" value="1"/>
</dbReference>
<dbReference type="PROSITE" id="PS51379">
    <property type="entry name" value="4FE4S_FER_2"/>
    <property type="match status" value="2"/>
</dbReference>
<proteinExistence type="predicted"/>
<organism>
    <name type="scientific">Methanocaldococcus jannaschii (strain ATCC 43067 / DSM 2661 / JAL-1 / JCM 10045 / NBRC 100440)</name>
    <name type="common">Methanococcus jannaschii</name>
    <dbReference type="NCBI Taxonomy" id="243232"/>
    <lineage>
        <taxon>Archaea</taxon>
        <taxon>Methanobacteriati</taxon>
        <taxon>Methanobacteriota</taxon>
        <taxon>Methanomada group</taxon>
        <taxon>Methanococci</taxon>
        <taxon>Methanococcales</taxon>
        <taxon>Methanocaldococcaceae</taxon>
        <taxon>Methanocaldococcus</taxon>
    </lineage>
</organism>
<accession>Q57998</accession>